<comment type="function">
    <text evidence="1">Involved in the proteasome-dependent degradation of fructose-1,6-bisphosphatase.</text>
</comment>
<comment type="subcellular location">
    <subcellularLocation>
        <location evidence="1">Cytoplasm</location>
    </subcellularLocation>
    <subcellularLocation>
        <location evidence="1">Nucleus</location>
    </subcellularLocation>
</comment>
<comment type="similarity">
    <text evidence="5">Belongs to the FYV10 family.</text>
</comment>
<comment type="sequence caution" evidence="5">
    <conflict type="erroneous gene model prediction">
        <sequence resource="EMBL-CDS" id="EAL92022"/>
    </conflict>
</comment>
<gene>
    <name type="primary">fyv10</name>
    <name type="ORF">AFUA_5G05720</name>
</gene>
<evidence type="ECO:0000250" key="1"/>
<evidence type="ECO:0000255" key="2">
    <source>
        <dbReference type="PROSITE-ProRule" id="PRU00058"/>
    </source>
</evidence>
<evidence type="ECO:0000255" key="3">
    <source>
        <dbReference type="PROSITE-ProRule" id="PRU00126"/>
    </source>
</evidence>
<evidence type="ECO:0000255" key="4">
    <source>
        <dbReference type="PROSITE-ProRule" id="PRU01215"/>
    </source>
</evidence>
<evidence type="ECO:0000305" key="5"/>
<keyword id="KW-0963">Cytoplasm</keyword>
<keyword id="KW-0479">Metal-binding</keyword>
<keyword id="KW-0539">Nucleus</keyword>
<keyword id="KW-1185">Reference proteome</keyword>
<keyword id="KW-0862">Zinc</keyword>
<keyword id="KW-0863">Zinc-finger</keyword>
<name>FYV10_ASPFU</name>
<proteinExistence type="inferred from homology"/>
<dbReference type="EMBL" id="AAHF01000003">
    <property type="protein sequence ID" value="EAL92022.1"/>
    <property type="status" value="ALT_SEQ"/>
    <property type="molecule type" value="Genomic_DNA"/>
</dbReference>
<dbReference type="RefSeq" id="XP_754060.1">
    <property type="nucleotide sequence ID" value="XM_748967.1"/>
</dbReference>
<dbReference type="SMR" id="Q4WTQ4"/>
<dbReference type="FunCoup" id="Q4WTQ4">
    <property type="interactions" value="919"/>
</dbReference>
<dbReference type="STRING" id="330879.Q4WTQ4"/>
<dbReference type="GeneID" id="3510767"/>
<dbReference type="KEGG" id="afm:AFUA_5G05720"/>
<dbReference type="eggNOG" id="KOG0396">
    <property type="taxonomic scope" value="Eukaryota"/>
</dbReference>
<dbReference type="HOGENOM" id="CLU_027445_2_0_1"/>
<dbReference type="InParanoid" id="Q4WTQ4"/>
<dbReference type="OrthoDB" id="1933455at2759"/>
<dbReference type="Proteomes" id="UP000002530">
    <property type="component" value="Chromosome 5"/>
</dbReference>
<dbReference type="GO" id="GO:0005737">
    <property type="term" value="C:cytoplasm"/>
    <property type="evidence" value="ECO:0000318"/>
    <property type="project" value="GO_Central"/>
</dbReference>
<dbReference type="GO" id="GO:0034657">
    <property type="term" value="C:GID complex"/>
    <property type="evidence" value="ECO:0000318"/>
    <property type="project" value="GO_Central"/>
</dbReference>
<dbReference type="GO" id="GO:0005634">
    <property type="term" value="C:nucleus"/>
    <property type="evidence" value="ECO:0000318"/>
    <property type="project" value="GO_Central"/>
</dbReference>
<dbReference type="GO" id="GO:0061630">
    <property type="term" value="F:ubiquitin protein ligase activity"/>
    <property type="evidence" value="ECO:0007669"/>
    <property type="project" value="InterPro"/>
</dbReference>
<dbReference type="GO" id="GO:0008270">
    <property type="term" value="F:zinc ion binding"/>
    <property type="evidence" value="ECO:0007669"/>
    <property type="project" value="UniProtKB-KW"/>
</dbReference>
<dbReference type="GO" id="GO:0045721">
    <property type="term" value="P:negative regulation of gluconeogenesis"/>
    <property type="evidence" value="ECO:0007669"/>
    <property type="project" value="UniProtKB-ARBA"/>
</dbReference>
<dbReference type="GO" id="GO:0043161">
    <property type="term" value="P:proteasome-mediated ubiquitin-dependent protein catabolic process"/>
    <property type="evidence" value="ECO:0000318"/>
    <property type="project" value="GO_Central"/>
</dbReference>
<dbReference type="InterPro" id="IPR013144">
    <property type="entry name" value="CRA_dom"/>
</dbReference>
<dbReference type="InterPro" id="IPR024964">
    <property type="entry name" value="CTLH/CRA"/>
</dbReference>
<dbReference type="InterPro" id="IPR006595">
    <property type="entry name" value="CTLH_C"/>
</dbReference>
<dbReference type="InterPro" id="IPR045098">
    <property type="entry name" value="Fyv10_fam"/>
</dbReference>
<dbReference type="InterPro" id="IPR006594">
    <property type="entry name" value="LisH"/>
</dbReference>
<dbReference type="InterPro" id="IPR044063">
    <property type="entry name" value="ZF_RING_GID"/>
</dbReference>
<dbReference type="PANTHER" id="PTHR12170:SF2">
    <property type="entry name" value="E3 UBIQUITIN-PROTEIN TRANSFERASE MAEA"/>
    <property type="match status" value="1"/>
</dbReference>
<dbReference type="PANTHER" id="PTHR12170">
    <property type="entry name" value="MACROPHAGE ERYTHROBLAST ATTACHER-RELATED"/>
    <property type="match status" value="1"/>
</dbReference>
<dbReference type="Pfam" id="PF10607">
    <property type="entry name" value="CTLH"/>
    <property type="match status" value="1"/>
</dbReference>
<dbReference type="SMART" id="SM00757">
    <property type="entry name" value="CRA"/>
    <property type="match status" value="1"/>
</dbReference>
<dbReference type="SMART" id="SM00668">
    <property type="entry name" value="CTLH"/>
    <property type="match status" value="1"/>
</dbReference>
<dbReference type="SMART" id="SM00667">
    <property type="entry name" value="LisH"/>
    <property type="match status" value="1"/>
</dbReference>
<dbReference type="PROSITE" id="PS50897">
    <property type="entry name" value="CTLH"/>
    <property type="match status" value="1"/>
</dbReference>
<dbReference type="PROSITE" id="PS50896">
    <property type="entry name" value="LISH"/>
    <property type="match status" value="1"/>
</dbReference>
<dbReference type="PROSITE" id="PS51867">
    <property type="entry name" value="ZF_RING_GID"/>
    <property type="match status" value="1"/>
</dbReference>
<feature type="chain" id="PRO_0000292451" description="Protein fyv10">
    <location>
        <begin position="1"/>
        <end position="411"/>
    </location>
</feature>
<feature type="domain" description="LisH" evidence="3">
    <location>
        <begin position="133"/>
        <end position="165"/>
    </location>
</feature>
<feature type="domain" description="CTLH" evidence="2">
    <location>
        <begin position="171"/>
        <end position="228"/>
    </location>
</feature>
<feature type="zinc finger region" description="RING-Gid-type" evidence="4">
    <location>
        <begin position="334"/>
        <end position="396"/>
    </location>
</feature>
<sequence>MAAELTSTKLNAENHLLLDQPLLRLPHELARRNFKSVQRLVEREREYVIPALKEAANASLSNAQTPDQTLAALDSMLARMQNLKRKMESIQQEEKKVQNQSRKRIQHLEHLHQIPSLADVKYDQWSRIRLDRLVVDHMLRSGYTESAQQLAQEKGIEDLVDLDVFVQCQRIAQSLRRGETKDALQWCNENKAALKKSQFNLEFELRLQQYIEMLRTGDRGKLMDAMAHAKRYLTPYTETQSKEIHRAAGLLAFPQDTKAEPYKLTDLQSMYSFDRWNYLSDLFIRTHHELLSLPSSPLLHIALSAGLSALKTPSCHSAYTSSSSNFLSTTTSVCPICSTELNELARNMPYAHHAKSYVESDPIVLPNGRIYGQQRLLDMSKKLGCVETGKVKDPTTGEIFDKSEMKKVYIM</sequence>
<reference key="1">
    <citation type="journal article" date="2005" name="Nature">
        <title>Genomic sequence of the pathogenic and allergenic filamentous fungus Aspergillus fumigatus.</title>
        <authorList>
            <person name="Nierman W.C."/>
            <person name="Pain A."/>
            <person name="Anderson M.J."/>
            <person name="Wortman J.R."/>
            <person name="Kim H.S."/>
            <person name="Arroyo J."/>
            <person name="Berriman M."/>
            <person name="Abe K."/>
            <person name="Archer D.B."/>
            <person name="Bermejo C."/>
            <person name="Bennett J.W."/>
            <person name="Bowyer P."/>
            <person name="Chen D."/>
            <person name="Collins M."/>
            <person name="Coulsen R."/>
            <person name="Davies R."/>
            <person name="Dyer P.S."/>
            <person name="Farman M.L."/>
            <person name="Fedorova N."/>
            <person name="Fedorova N.D."/>
            <person name="Feldblyum T.V."/>
            <person name="Fischer R."/>
            <person name="Fosker N."/>
            <person name="Fraser A."/>
            <person name="Garcia J.L."/>
            <person name="Garcia M.J."/>
            <person name="Goble A."/>
            <person name="Goldman G.H."/>
            <person name="Gomi K."/>
            <person name="Griffith-Jones S."/>
            <person name="Gwilliam R."/>
            <person name="Haas B.J."/>
            <person name="Haas H."/>
            <person name="Harris D.E."/>
            <person name="Horiuchi H."/>
            <person name="Huang J."/>
            <person name="Humphray S."/>
            <person name="Jimenez J."/>
            <person name="Keller N."/>
            <person name="Khouri H."/>
            <person name="Kitamoto K."/>
            <person name="Kobayashi T."/>
            <person name="Konzack S."/>
            <person name="Kulkarni R."/>
            <person name="Kumagai T."/>
            <person name="Lafton A."/>
            <person name="Latge J.-P."/>
            <person name="Li W."/>
            <person name="Lord A."/>
            <person name="Lu C."/>
            <person name="Majoros W.H."/>
            <person name="May G.S."/>
            <person name="Miller B.L."/>
            <person name="Mohamoud Y."/>
            <person name="Molina M."/>
            <person name="Monod M."/>
            <person name="Mouyna I."/>
            <person name="Mulligan S."/>
            <person name="Murphy L.D."/>
            <person name="O'Neil S."/>
            <person name="Paulsen I."/>
            <person name="Penalva M.A."/>
            <person name="Pertea M."/>
            <person name="Price C."/>
            <person name="Pritchard B.L."/>
            <person name="Quail M.A."/>
            <person name="Rabbinowitsch E."/>
            <person name="Rawlins N."/>
            <person name="Rajandream M.A."/>
            <person name="Reichard U."/>
            <person name="Renauld H."/>
            <person name="Robson G.D."/>
            <person name="Rodriguez de Cordoba S."/>
            <person name="Rodriguez-Pena J.M."/>
            <person name="Ronning C.M."/>
            <person name="Rutter S."/>
            <person name="Salzberg S.L."/>
            <person name="Sanchez M."/>
            <person name="Sanchez-Ferrero J.C."/>
            <person name="Saunders D."/>
            <person name="Seeger K."/>
            <person name="Squares R."/>
            <person name="Squares S."/>
            <person name="Takeuchi M."/>
            <person name="Tekaia F."/>
            <person name="Turner G."/>
            <person name="Vazquez de Aldana C.R."/>
            <person name="Weidman J."/>
            <person name="White O."/>
            <person name="Woodward J.R."/>
            <person name="Yu J.-H."/>
            <person name="Fraser C.M."/>
            <person name="Galagan J.E."/>
            <person name="Asai K."/>
            <person name="Machida M."/>
            <person name="Hall N."/>
            <person name="Barrell B.G."/>
            <person name="Denning D.W."/>
        </authorList>
    </citation>
    <scope>NUCLEOTIDE SEQUENCE [LARGE SCALE GENOMIC DNA]</scope>
    <source>
        <strain>ATCC MYA-4609 / CBS 101355 / FGSC A1100 / Af293</strain>
    </source>
</reference>
<accession>Q4WTQ4</accession>
<protein>
    <recommendedName>
        <fullName>Protein fyv10</fullName>
    </recommendedName>
</protein>
<organism>
    <name type="scientific">Aspergillus fumigatus (strain ATCC MYA-4609 / CBS 101355 / FGSC A1100 / Af293)</name>
    <name type="common">Neosartorya fumigata</name>
    <dbReference type="NCBI Taxonomy" id="330879"/>
    <lineage>
        <taxon>Eukaryota</taxon>
        <taxon>Fungi</taxon>
        <taxon>Dikarya</taxon>
        <taxon>Ascomycota</taxon>
        <taxon>Pezizomycotina</taxon>
        <taxon>Eurotiomycetes</taxon>
        <taxon>Eurotiomycetidae</taxon>
        <taxon>Eurotiales</taxon>
        <taxon>Aspergillaceae</taxon>
        <taxon>Aspergillus</taxon>
        <taxon>Aspergillus subgen. Fumigati</taxon>
    </lineage>
</organism>